<evidence type="ECO:0000255" key="1">
    <source>
        <dbReference type="HAMAP-Rule" id="MF_00176"/>
    </source>
</evidence>
<accession>A4J0G4</accession>
<feature type="chain" id="PRO_1000071633" description="Serine--tRNA ligase">
    <location>
        <begin position="1"/>
        <end position="424"/>
    </location>
</feature>
<feature type="binding site" evidence="1">
    <location>
        <begin position="230"/>
        <end position="232"/>
    </location>
    <ligand>
        <name>L-serine</name>
        <dbReference type="ChEBI" id="CHEBI:33384"/>
    </ligand>
</feature>
<feature type="binding site" evidence="1">
    <location>
        <begin position="261"/>
        <end position="263"/>
    </location>
    <ligand>
        <name>ATP</name>
        <dbReference type="ChEBI" id="CHEBI:30616"/>
    </ligand>
</feature>
<feature type="binding site" evidence="1">
    <location>
        <position position="284"/>
    </location>
    <ligand>
        <name>L-serine</name>
        <dbReference type="ChEBI" id="CHEBI:33384"/>
    </ligand>
</feature>
<feature type="binding site" evidence="1">
    <location>
        <begin position="348"/>
        <end position="351"/>
    </location>
    <ligand>
        <name>ATP</name>
        <dbReference type="ChEBI" id="CHEBI:30616"/>
    </ligand>
</feature>
<feature type="binding site" evidence="1">
    <location>
        <position position="384"/>
    </location>
    <ligand>
        <name>L-serine</name>
        <dbReference type="ChEBI" id="CHEBI:33384"/>
    </ligand>
</feature>
<dbReference type="EC" id="6.1.1.11" evidence="1"/>
<dbReference type="EMBL" id="CP000612">
    <property type="protein sequence ID" value="ABO48567.1"/>
    <property type="molecule type" value="Genomic_DNA"/>
</dbReference>
<dbReference type="RefSeq" id="WP_011876411.1">
    <property type="nucleotide sequence ID" value="NC_009253.1"/>
</dbReference>
<dbReference type="SMR" id="A4J0G4"/>
<dbReference type="STRING" id="349161.Dred_0015"/>
<dbReference type="KEGG" id="drm:Dred_0015"/>
<dbReference type="eggNOG" id="COG0172">
    <property type="taxonomic scope" value="Bacteria"/>
</dbReference>
<dbReference type="HOGENOM" id="CLU_023797_1_1_9"/>
<dbReference type="OrthoDB" id="9804647at2"/>
<dbReference type="UniPathway" id="UPA00906">
    <property type="reaction ID" value="UER00895"/>
</dbReference>
<dbReference type="Proteomes" id="UP000001556">
    <property type="component" value="Chromosome"/>
</dbReference>
<dbReference type="GO" id="GO:0005737">
    <property type="term" value="C:cytoplasm"/>
    <property type="evidence" value="ECO:0007669"/>
    <property type="project" value="UniProtKB-SubCell"/>
</dbReference>
<dbReference type="GO" id="GO:0005524">
    <property type="term" value="F:ATP binding"/>
    <property type="evidence" value="ECO:0007669"/>
    <property type="project" value="UniProtKB-UniRule"/>
</dbReference>
<dbReference type="GO" id="GO:0140096">
    <property type="term" value="F:catalytic activity, acting on a protein"/>
    <property type="evidence" value="ECO:0007669"/>
    <property type="project" value="UniProtKB-ARBA"/>
</dbReference>
<dbReference type="GO" id="GO:0004828">
    <property type="term" value="F:serine-tRNA ligase activity"/>
    <property type="evidence" value="ECO:0007669"/>
    <property type="project" value="UniProtKB-UniRule"/>
</dbReference>
<dbReference type="GO" id="GO:0016740">
    <property type="term" value="F:transferase activity"/>
    <property type="evidence" value="ECO:0007669"/>
    <property type="project" value="UniProtKB-ARBA"/>
</dbReference>
<dbReference type="GO" id="GO:0016260">
    <property type="term" value="P:selenocysteine biosynthetic process"/>
    <property type="evidence" value="ECO:0007669"/>
    <property type="project" value="UniProtKB-UniRule"/>
</dbReference>
<dbReference type="GO" id="GO:0006434">
    <property type="term" value="P:seryl-tRNA aminoacylation"/>
    <property type="evidence" value="ECO:0007669"/>
    <property type="project" value="UniProtKB-UniRule"/>
</dbReference>
<dbReference type="CDD" id="cd00770">
    <property type="entry name" value="SerRS_core"/>
    <property type="match status" value="1"/>
</dbReference>
<dbReference type="Gene3D" id="3.30.930.10">
    <property type="entry name" value="Bira Bifunctional Protein, Domain 2"/>
    <property type="match status" value="1"/>
</dbReference>
<dbReference type="Gene3D" id="1.10.287.40">
    <property type="entry name" value="Serine-tRNA synthetase, tRNA binding domain"/>
    <property type="match status" value="1"/>
</dbReference>
<dbReference type="HAMAP" id="MF_00176">
    <property type="entry name" value="Ser_tRNA_synth_type1"/>
    <property type="match status" value="1"/>
</dbReference>
<dbReference type="InterPro" id="IPR002314">
    <property type="entry name" value="aa-tRNA-synt_IIb"/>
</dbReference>
<dbReference type="InterPro" id="IPR006195">
    <property type="entry name" value="aa-tRNA-synth_II"/>
</dbReference>
<dbReference type="InterPro" id="IPR045864">
    <property type="entry name" value="aa-tRNA-synth_II/BPL/LPL"/>
</dbReference>
<dbReference type="InterPro" id="IPR002317">
    <property type="entry name" value="Ser-tRNA-ligase_type_1"/>
</dbReference>
<dbReference type="InterPro" id="IPR015866">
    <property type="entry name" value="Ser-tRNA-synth_1_N"/>
</dbReference>
<dbReference type="InterPro" id="IPR042103">
    <property type="entry name" value="SerRS_1_N_sf"/>
</dbReference>
<dbReference type="InterPro" id="IPR033729">
    <property type="entry name" value="SerRS_core"/>
</dbReference>
<dbReference type="InterPro" id="IPR010978">
    <property type="entry name" value="tRNA-bd_arm"/>
</dbReference>
<dbReference type="NCBIfam" id="TIGR00414">
    <property type="entry name" value="serS"/>
    <property type="match status" value="1"/>
</dbReference>
<dbReference type="PANTHER" id="PTHR43697:SF1">
    <property type="entry name" value="SERINE--TRNA LIGASE"/>
    <property type="match status" value="1"/>
</dbReference>
<dbReference type="PANTHER" id="PTHR43697">
    <property type="entry name" value="SERYL-TRNA SYNTHETASE"/>
    <property type="match status" value="1"/>
</dbReference>
<dbReference type="Pfam" id="PF02403">
    <property type="entry name" value="Seryl_tRNA_N"/>
    <property type="match status" value="1"/>
</dbReference>
<dbReference type="Pfam" id="PF00587">
    <property type="entry name" value="tRNA-synt_2b"/>
    <property type="match status" value="1"/>
</dbReference>
<dbReference type="PIRSF" id="PIRSF001529">
    <property type="entry name" value="Ser-tRNA-synth_IIa"/>
    <property type="match status" value="1"/>
</dbReference>
<dbReference type="PRINTS" id="PR00981">
    <property type="entry name" value="TRNASYNTHSER"/>
</dbReference>
<dbReference type="SUPFAM" id="SSF55681">
    <property type="entry name" value="Class II aaRS and biotin synthetases"/>
    <property type="match status" value="1"/>
</dbReference>
<dbReference type="SUPFAM" id="SSF46589">
    <property type="entry name" value="tRNA-binding arm"/>
    <property type="match status" value="1"/>
</dbReference>
<dbReference type="PROSITE" id="PS50862">
    <property type="entry name" value="AA_TRNA_LIGASE_II"/>
    <property type="match status" value="1"/>
</dbReference>
<gene>
    <name evidence="1" type="primary">serS</name>
    <name type="ordered locus">Dred_0015</name>
</gene>
<reference key="1">
    <citation type="submission" date="2007-03" db="EMBL/GenBank/DDBJ databases">
        <title>Complete sequence of Desulfotomaculum reducens MI-1.</title>
        <authorList>
            <consortium name="US DOE Joint Genome Institute"/>
            <person name="Copeland A."/>
            <person name="Lucas S."/>
            <person name="Lapidus A."/>
            <person name="Barry K."/>
            <person name="Detter J.C."/>
            <person name="Glavina del Rio T."/>
            <person name="Hammon N."/>
            <person name="Israni S."/>
            <person name="Dalin E."/>
            <person name="Tice H."/>
            <person name="Pitluck S."/>
            <person name="Sims D."/>
            <person name="Brettin T."/>
            <person name="Bruce D."/>
            <person name="Han C."/>
            <person name="Tapia R."/>
            <person name="Schmutz J."/>
            <person name="Larimer F."/>
            <person name="Land M."/>
            <person name="Hauser L."/>
            <person name="Kyrpides N."/>
            <person name="Kim E."/>
            <person name="Tebo B.M."/>
            <person name="Richardson P."/>
        </authorList>
    </citation>
    <scope>NUCLEOTIDE SEQUENCE [LARGE SCALE GENOMIC DNA]</scope>
    <source>
        <strain>ATCC BAA-1160 / DSM 100696 / MI-1</strain>
    </source>
</reference>
<proteinExistence type="inferred from homology"/>
<keyword id="KW-0030">Aminoacyl-tRNA synthetase</keyword>
<keyword id="KW-0067">ATP-binding</keyword>
<keyword id="KW-0963">Cytoplasm</keyword>
<keyword id="KW-0436">Ligase</keyword>
<keyword id="KW-0547">Nucleotide-binding</keyword>
<keyword id="KW-0648">Protein biosynthesis</keyword>
<keyword id="KW-1185">Reference proteome</keyword>
<sequence>MLDIKFVRSNPELVLEGLKKRGSDISLDEFLKLDSMRREKLVVAEQLKNTRNVVSQEIGKLKKAGQDAEEKTLEMRKVSQKIKDMDDEIRNIEEKLQEILLSIPNIPHESVPVGKDENDNVEIRRWGKPRGFEFEPKPHWDLGEDLNILDFERGGKVTGARFSFYKGMGARLERALINFMLDLHTREHGYTEIFPPFIVNGDSMLGTGQLPKFAEDMFKLEGLNYYLIPTAEVPVTNLYRDEILAEEQLPIYHCAYSACFRAEAGAAGRDTRGLIRQHQFNKVELVKFSKPEESFDELERLTANAEKILQALGLPYRVVLLSTGDMGFTSAKTYDLEVWLPSYNAYKEISSCSNFLDFQARRANIKYRPTPKSKPEFVHTLNGSGIAVGRALSAILENYQEADGSITVPPVLVPYMGGIERITL</sequence>
<comment type="function">
    <text evidence="1">Catalyzes the attachment of serine to tRNA(Ser). Is also able to aminoacylate tRNA(Sec) with serine, to form the misacylated tRNA L-seryl-tRNA(Sec), which will be further converted into selenocysteinyl-tRNA(Sec).</text>
</comment>
<comment type="catalytic activity">
    <reaction evidence="1">
        <text>tRNA(Ser) + L-serine + ATP = L-seryl-tRNA(Ser) + AMP + diphosphate + H(+)</text>
        <dbReference type="Rhea" id="RHEA:12292"/>
        <dbReference type="Rhea" id="RHEA-COMP:9669"/>
        <dbReference type="Rhea" id="RHEA-COMP:9703"/>
        <dbReference type="ChEBI" id="CHEBI:15378"/>
        <dbReference type="ChEBI" id="CHEBI:30616"/>
        <dbReference type="ChEBI" id="CHEBI:33019"/>
        <dbReference type="ChEBI" id="CHEBI:33384"/>
        <dbReference type="ChEBI" id="CHEBI:78442"/>
        <dbReference type="ChEBI" id="CHEBI:78533"/>
        <dbReference type="ChEBI" id="CHEBI:456215"/>
        <dbReference type="EC" id="6.1.1.11"/>
    </reaction>
</comment>
<comment type="catalytic activity">
    <reaction evidence="1">
        <text>tRNA(Sec) + L-serine + ATP = L-seryl-tRNA(Sec) + AMP + diphosphate + H(+)</text>
        <dbReference type="Rhea" id="RHEA:42580"/>
        <dbReference type="Rhea" id="RHEA-COMP:9742"/>
        <dbReference type="Rhea" id="RHEA-COMP:10128"/>
        <dbReference type="ChEBI" id="CHEBI:15378"/>
        <dbReference type="ChEBI" id="CHEBI:30616"/>
        <dbReference type="ChEBI" id="CHEBI:33019"/>
        <dbReference type="ChEBI" id="CHEBI:33384"/>
        <dbReference type="ChEBI" id="CHEBI:78442"/>
        <dbReference type="ChEBI" id="CHEBI:78533"/>
        <dbReference type="ChEBI" id="CHEBI:456215"/>
        <dbReference type="EC" id="6.1.1.11"/>
    </reaction>
</comment>
<comment type="pathway">
    <text evidence="1">Aminoacyl-tRNA biosynthesis; selenocysteinyl-tRNA(Sec) biosynthesis; L-seryl-tRNA(Sec) from L-serine and tRNA(Sec): step 1/1.</text>
</comment>
<comment type="subunit">
    <text evidence="1">Homodimer. The tRNA molecule binds across the dimer.</text>
</comment>
<comment type="subcellular location">
    <subcellularLocation>
        <location evidence="1">Cytoplasm</location>
    </subcellularLocation>
</comment>
<comment type="domain">
    <text evidence="1">Consists of two distinct domains, a catalytic core and a N-terminal extension that is involved in tRNA binding.</text>
</comment>
<comment type="similarity">
    <text evidence="1">Belongs to the class-II aminoacyl-tRNA synthetase family. Type-1 seryl-tRNA synthetase subfamily.</text>
</comment>
<name>SYS_DESRM</name>
<organism>
    <name type="scientific">Desulforamulus reducens (strain ATCC BAA-1160 / DSM 100696 / MI-1)</name>
    <name type="common">Desulfotomaculum reducens</name>
    <dbReference type="NCBI Taxonomy" id="349161"/>
    <lineage>
        <taxon>Bacteria</taxon>
        <taxon>Bacillati</taxon>
        <taxon>Bacillota</taxon>
        <taxon>Clostridia</taxon>
        <taxon>Eubacteriales</taxon>
        <taxon>Peptococcaceae</taxon>
        <taxon>Desulforamulus</taxon>
    </lineage>
</organism>
<protein>
    <recommendedName>
        <fullName evidence="1">Serine--tRNA ligase</fullName>
        <ecNumber evidence="1">6.1.1.11</ecNumber>
    </recommendedName>
    <alternativeName>
        <fullName evidence="1">Seryl-tRNA synthetase</fullName>
        <shortName evidence="1">SerRS</shortName>
    </alternativeName>
    <alternativeName>
        <fullName evidence="1">Seryl-tRNA(Ser/Sec) synthetase</fullName>
    </alternativeName>
</protein>